<sequence>MENEFTYEDYQRTAEWLRSHTKHRPQVAVICGSGLGGLTAKLTQPQAFDYNEIPNFPQSTVQGHAGRLVFGFLNGRSCVMMQGRFHMYEGYSLSKVTFPVRVFHLLGVDTLVVTNAAGGLNPKFEVGDIMLIRDHINLPGFCGQNPLRGPNDERFGVRFPAMSDAYDRDMRQKAFNAWKQMGEQRELQEGTYIMSAGPTFETVAESCLLRMLGADAVGMSTVPEVIVARHCGLRVFGFSLITNKVVMDYNNLEKASHQEVLEAGKAAAQKLEQFVSILMESIPPRERAN</sequence>
<accession>P85973</accession>
<accession>A6KEC5</accession>
<evidence type="ECO:0000250" key="1">
    <source>
        <dbReference type="UniProtKB" id="P00491"/>
    </source>
</evidence>
<evidence type="ECO:0000250" key="2">
    <source>
        <dbReference type="UniProtKB" id="P23492"/>
    </source>
</evidence>
<evidence type="ECO:0000250" key="3">
    <source>
        <dbReference type="UniProtKB" id="P55859"/>
    </source>
</evidence>
<evidence type="ECO:0000255" key="4"/>
<evidence type="ECO:0000305" key="5"/>
<comment type="function">
    <text evidence="1">Catalyzes the phosphorolytic breakdown of the N-glycosidic bond in the beta-(deoxy)ribonucleoside molecules, with the formation of the corresponding free purine bases and pentose-1-phosphate (By similarity). Preferentially acts on 6-oxopurine nucleosides including inosine and guanosine (By similarity).</text>
</comment>
<comment type="catalytic activity">
    <reaction evidence="1">
        <text>inosine + phosphate = alpha-D-ribose 1-phosphate + hypoxanthine</text>
        <dbReference type="Rhea" id="RHEA:27646"/>
        <dbReference type="ChEBI" id="CHEBI:17368"/>
        <dbReference type="ChEBI" id="CHEBI:17596"/>
        <dbReference type="ChEBI" id="CHEBI:43474"/>
        <dbReference type="ChEBI" id="CHEBI:57720"/>
        <dbReference type="EC" id="2.4.2.1"/>
    </reaction>
</comment>
<comment type="catalytic activity">
    <reaction evidence="1">
        <text>guanosine + phosphate = alpha-D-ribose 1-phosphate + guanine</text>
        <dbReference type="Rhea" id="RHEA:13233"/>
        <dbReference type="ChEBI" id="CHEBI:16235"/>
        <dbReference type="ChEBI" id="CHEBI:16750"/>
        <dbReference type="ChEBI" id="CHEBI:43474"/>
        <dbReference type="ChEBI" id="CHEBI:57720"/>
        <dbReference type="EC" id="2.4.2.1"/>
    </reaction>
</comment>
<comment type="catalytic activity">
    <reaction evidence="2">
        <text>2'-deoxyguanosine + phosphate = 2-deoxy-alpha-D-ribose 1-phosphate + guanine</text>
        <dbReference type="Rhea" id="RHEA:27738"/>
        <dbReference type="ChEBI" id="CHEBI:16235"/>
        <dbReference type="ChEBI" id="CHEBI:17172"/>
        <dbReference type="ChEBI" id="CHEBI:43474"/>
        <dbReference type="ChEBI" id="CHEBI:57259"/>
        <dbReference type="EC" id="2.4.2.1"/>
    </reaction>
</comment>
<comment type="catalytic activity">
    <reaction evidence="2">
        <text>2'-deoxyinosine + phosphate = 2-deoxy-alpha-D-ribose 1-phosphate + hypoxanthine</text>
        <dbReference type="Rhea" id="RHEA:27750"/>
        <dbReference type="ChEBI" id="CHEBI:17368"/>
        <dbReference type="ChEBI" id="CHEBI:28997"/>
        <dbReference type="ChEBI" id="CHEBI:43474"/>
        <dbReference type="ChEBI" id="CHEBI:57259"/>
        <dbReference type="EC" id="2.4.2.1"/>
    </reaction>
</comment>
<comment type="pathway">
    <text evidence="1">Purine metabolism; purine nucleoside salvage.</text>
</comment>
<comment type="subunit">
    <text evidence="1">Homotrimer.</text>
</comment>
<comment type="subcellular location">
    <subcellularLocation>
        <location evidence="1">Cytoplasm</location>
    </subcellularLocation>
</comment>
<comment type="similarity">
    <text evidence="4">Belongs to the PNP/MTAP phosphorylase family.</text>
</comment>
<proteinExistence type="evidence at protein level"/>
<dbReference type="EC" id="2.4.2.1" evidence="1"/>
<dbReference type="EMBL" id="CH474040">
    <property type="protein sequence ID" value="EDL88431.1"/>
    <property type="molecule type" value="Genomic_DNA"/>
</dbReference>
<dbReference type="RefSeq" id="NP_001386607.1">
    <property type="nucleotide sequence ID" value="NM_001399678.1"/>
</dbReference>
<dbReference type="RefSeq" id="XP_006251919.1">
    <property type="nucleotide sequence ID" value="XM_006251857.3"/>
</dbReference>
<dbReference type="SMR" id="P85973"/>
<dbReference type="FunCoup" id="P85973">
    <property type="interactions" value="376"/>
</dbReference>
<dbReference type="STRING" id="10116.ENSRNOP00000013582"/>
<dbReference type="BindingDB" id="P85973"/>
<dbReference type="ChEMBL" id="CHEMBL2395"/>
<dbReference type="GlyGen" id="P85973">
    <property type="glycosylation" value="1 site, 1 O-linked glycan (1 site)"/>
</dbReference>
<dbReference type="iPTMnet" id="P85973"/>
<dbReference type="PhosphoSitePlus" id="P85973"/>
<dbReference type="jPOST" id="P85973"/>
<dbReference type="PaxDb" id="10116-ENSRNOP00000013582"/>
<dbReference type="Ensembl" id="ENSRNOT00000013582.7">
    <property type="protein sequence ID" value="ENSRNOP00000013582.6"/>
    <property type="gene ID" value="ENSRNOG00000009982.7"/>
</dbReference>
<dbReference type="GeneID" id="290029"/>
<dbReference type="UCSC" id="RGD:1597189">
    <property type="organism name" value="rat"/>
</dbReference>
<dbReference type="AGR" id="RGD:1597189"/>
<dbReference type="RGD" id="1597189">
    <property type="gene designation" value="Pnp"/>
</dbReference>
<dbReference type="eggNOG" id="KOG3984">
    <property type="taxonomic scope" value="Eukaryota"/>
</dbReference>
<dbReference type="GeneTree" id="ENSGT00950000182991"/>
<dbReference type="HOGENOM" id="CLU_054456_1_2_1"/>
<dbReference type="InParanoid" id="P85973"/>
<dbReference type="OMA" id="EGVYAQF"/>
<dbReference type="OrthoDB" id="10261782at2759"/>
<dbReference type="PhylomeDB" id="P85973"/>
<dbReference type="TreeFam" id="TF300049"/>
<dbReference type="BRENDA" id="2.4.2.1">
    <property type="organism ID" value="5301"/>
</dbReference>
<dbReference type="Reactome" id="R-RNO-6798695">
    <property type="pathway name" value="Neutrophil degranulation"/>
</dbReference>
<dbReference type="Reactome" id="R-RNO-74217">
    <property type="pathway name" value="Purine salvage"/>
</dbReference>
<dbReference type="Reactome" id="R-RNO-74259">
    <property type="pathway name" value="Purine catabolism"/>
</dbReference>
<dbReference type="Reactome" id="R-RNO-9755088">
    <property type="pathway name" value="Ribavirin ADME"/>
</dbReference>
<dbReference type="UniPathway" id="UPA00606"/>
<dbReference type="PRO" id="PR:P85973"/>
<dbReference type="Proteomes" id="UP000002494">
    <property type="component" value="Chromosome 15"/>
</dbReference>
<dbReference type="Proteomes" id="UP000234681">
    <property type="component" value="Chromosome 15"/>
</dbReference>
<dbReference type="Bgee" id="ENSRNOG00000009982">
    <property type="expression patterns" value="Expressed in lung and 19 other cell types or tissues"/>
</dbReference>
<dbReference type="GO" id="GO:0005737">
    <property type="term" value="C:cytoplasm"/>
    <property type="evidence" value="ECO:0000266"/>
    <property type="project" value="RGD"/>
</dbReference>
<dbReference type="GO" id="GO:0005576">
    <property type="term" value="C:extracellular region"/>
    <property type="evidence" value="ECO:0000314"/>
    <property type="project" value="RGD"/>
</dbReference>
<dbReference type="GO" id="GO:0047975">
    <property type="term" value="F:guanosine phosphorylase activity"/>
    <property type="evidence" value="ECO:0007669"/>
    <property type="project" value="RHEA"/>
</dbReference>
<dbReference type="GO" id="GO:0042802">
    <property type="term" value="F:identical protein binding"/>
    <property type="evidence" value="ECO:0000266"/>
    <property type="project" value="RGD"/>
</dbReference>
<dbReference type="GO" id="GO:0001882">
    <property type="term" value="F:nucleoside binding"/>
    <property type="evidence" value="ECO:0000266"/>
    <property type="project" value="RGD"/>
</dbReference>
<dbReference type="GO" id="GO:0042301">
    <property type="term" value="F:phosphate ion binding"/>
    <property type="evidence" value="ECO:0000266"/>
    <property type="project" value="RGD"/>
</dbReference>
<dbReference type="GO" id="GO:0002060">
    <property type="term" value="F:purine nucleobase binding"/>
    <property type="evidence" value="ECO:0000266"/>
    <property type="project" value="RGD"/>
</dbReference>
<dbReference type="GO" id="GO:0004731">
    <property type="term" value="F:purine-nucleoside phosphorylase activity"/>
    <property type="evidence" value="ECO:0000314"/>
    <property type="project" value="RGD"/>
</dbReference>
<dbReference type="GO" id="GO:0000255">
    <property type="term" value="P:allantoin metabolic process"/>
    <property type="evidence" value="ECO:0000266"/>
    <property type="project" value="RGD"/>
</dbReference>
<dbReference type="GO" id="GO:0046059">
    <property type="term" value="P:dAMP catabolic process"/>
    <property type="evidence" value="ECO:0000266"/>
    <property type="project" value="RGD"/>
</dbReference>
<dbReference type="GO" id="GO:0006157">
    <property type="term" value="P:deoxyadenosine catabolic process"/>
    <property type="evidence" value="ECO:0000266"/>
    <property type="project" value="RGD"/>
</dbReference>
<dbReference type="GO" id="GO:0006149">
    <property type="term" value="P:deoxyinosine catabolic process"/>
    <property type="evidence" value="ECO:0000266"/>
    <property type="project" value="RGD"/>
</dbReference>
<dbReference type="GO" id="GO:0006955">
    <property type="term" value="P:immune response"/>
    <property type="evidence" value="ECO:0000266"/>
    <property type="project" value="RGD"/>
</dbReference>
<dbReference type="GO" id="GO:0006204">
    <property type="term" value="P:IMP catabolic process"/>
    <property type="evidence" value="ECO:0000266"/>
    <property type="project" value="RGD"/>
</dbReference>
<dbReference type="GO" id="GO:0006148">
    <property type="term" value="P:inosine catabolic process"/>
    <property type="evidence" value="ECO:0000266"/>
    <property type="project" value="RGD"/>
</dbReference>
<dbReference type="GO" id="GO:0006738">
    <property type="term" value="P:nicotinamide riboside catabolic process"/>
    <property type="evidence" value="ECO:0000266"/>
    <property type="project" value="RGD"/>
</dbReference>
<dbReference type="GO" id="GO:0006139">
    <property type="term" value="P:nucleobase-containing compound metabolic process"/>
    <property type="evidence" value="ECO:0000266"/>
    <property type="project" value="RGD"/>
</dbReference>
<dbReference type="GO" id="GO:0009165">
    <property type="term" value="P:nucleotide biosynthetic process"/>
    <property type="evidence" value="ECO:0000266"/>
    <property type="project" value="RGD"/>
</dbReference>
<dbReference type="GO" id="GO:0046638">
    <property type="term" value="P:positive regulation of alpha-beta T cell differentiation"/>
    <property type="evidence" value="ECO:0000266"/>
    <property type="project" value="RGD"/>
</dbReference>
<dbReference type="GO" id="GO:0032743">
    <property type="term" value="P:positive regulation of interleukin-2 production"/>
    <property type="evidence" value="ECO:0000266"/>
    <property type="project" value="RGD"/>
</dbReference>
<dbReference type="GO" id="GO:0042102">
    <property type="term" value="P:positive regulation of T cell proliferation"/>
    <property type="evidence" value="ECO:0000266"/>
    <property type="project" value="RGD"/>
</dbReference>
<dbReference type="GO" id="GO:0006166">
    <property type="term" value="P:purine ribonucleoside salvage"/>
    <property type="evidence" value="ECO:0007669"/>
    <property type="project" value="UniProtKB-KW"/>
</dbReference>
<dbReference type="GO" id="GO:0043101">
    <property type="term" value="P:purine-containing compound salvage"/>
    <property type="evidence" value="ECO:0000266"/>
    <property type="project" value="RGD"/>
</dbReference>
<dbReference type="GO" id="GO:0009410">
    <property type="term" value="P:response to xenobiotic stimulus"/>
    <property type="evidence" value="ECO:0000266"/>
    <property type="project" value="RGD"/>
</dbReference>
<dbReference type="GO" id="GO:0034418">
    <property type="term" value="P:urate biosynthetic process"/>
    <property type="evidence" value="ECO:0000266"/>
    <property type="project" value="RGD"/>
</dbReference>
<dbReference type="CDD" id="cd09009">
    <property type="entry name" value="PNP-EcPNPII_like"/>
    <property type="match status" value="1"/>
</dbReference>
<dbReference type="FunFam" id="3.40.50.1580:FF:000004">
    <property type="entry name" value="Purine nucleoside phosphorylase"/>
    <property type="match status" value="1"/>
</dbReference>
<dbReference type="Gene3D" id="3.40.50.1580">
    <property type="entry name" value="Nucleoside phosphorylase domain"/>
    <property type="match status" value="1"/>
</dbReference>
<dbReference type="InterPro" id="IPR000845">
    <property type="entry name" value="Nucleoside_phosphorylase_d"/>
</dbReference>
<dbReference type="InterPro" id="IPR035994">
    <property type="entry name" value="Nucleoside_phosphorylase_sf"/>
</dbReference>
<dbReference type="InterPro" id="IPR011270">
    <property type="entry name" value="Pur_Nuc_Pase_Ino/Guo-sp"/>
</dbReference>
<dbReference type="InterPro" id="IPR011268">
    <property type="entry name" value="Purine_phosphorylase"/>
</dbReference>
<dbReference type="InterPro" id="IPR018099">
    <property type="entry name" value="Purine_phosphorylase-2_CS"/>
</dbReference>
<dbReference type="NCBIfam" id="TIGR01700">
    <property type="entry name" value="PNPH"/>
    <property type="match status" value="1"/>
</dbReference>
<dbReference type="NCBIfam" id="TIGR01697">
    <property type="entry name" value="PNPH-PUNA-XAPA"/>
    <property type="match status" value="1"/>
</dbReference>
<dbReference type="NCBIfam" id="NF006054">
    <property type="entry name" value="PRK08202.1"/>
    <property type="match status" value="1"/>
</dbReference>
<dbReference type="PANTHER" id="PTHR11904">
    <property type="entry name" value="METHYLTHIOADENOSINE/PURINE NUCLEOSIDE PHOSPHORYLASE"/>
    <property type="match status" value="1"/>
</dbReference>
<dbReference type="PANTHER" id="PTHR11904:SF12">
    <property type="entry name" value="PURINE NUCLEOSIDE PHOSPHORYLASE"/>
    <property type="match status" value="1"/>
</dbReference>
<dbReference type="Pfam" id="PF01048">
    <property type="entry name" value="PNP_UDP_1"/>
    <property type="match status" value="1"/>
</dbReference>
<dbReference type="PIRSF" id="PIRSF000477">
    <property type="entry name" value="PurNPase"/>
    <property type="match status" value="1"/>
</dbReference>
<dbReference type="SUPFAM" id="SSF53167">
    <property type="entry name" value="Purine and uridine phosphorylases"/>
    <property type="match status" value="1"/>
</dbReference>
<dbReference type="PROSITE" id="PS01240">
    <property type="entry name" value="PNP_MTAP_2"/>
    <property type="match status" value="1"/>
</dbReference>
<protein>
    <recommendedName>
        <fullName evidence="1">Purine nucleoside phosphorylase</fullName>
        <shortName evidence="1">PNP</shortName>
        <ecNumber evidence="1">2.4.2.1</ecNumber>
    </recommendedName>
    <alternativeName>
        <fullName evidence="1">Inosine phosphorylase</fullName>
    </alternativeName>
    <alternativeName>
        <fullName>Inosine-guanosine phosphorylase</fullName>
    </alternativeName>
</protein>
<keyword id="KW-0007">Acetylation</keyword>
<keyword id="KW-0963">Cytoplasm</keyword>
<keyword id="KW-0328">Glycosyltransferase</keyword>
<keyword id="KW-0660">Purine salvage</keyword>
<keyword id="KW-1185">Reference proteome</keyword>
<keyword id="KW-0808">Transferase</keyword>
<reference evidence="5" key="1">
    <citation type="submission" date="2005-07" db="EMBL/GenBank/DDBJ databases">
        <authorList>
            <person name="Mural R.J."/>
            <person name="Adams M.D."/>
            <person name="Myers E.W."/>
            <person name="Smith H.O."/>
            <person name="Venter J.C."/>
        </authorList>
    </citation>
    <scope>NUCLEOTIDE SEQUENCE [LARGE SCALE GENOMIC DNA]</scope>
</reference>
<reference key="2">
    <citation type="journal article" date="2009" name="Proteomics">
        <title>Proteome profile of the mature rat olfactory bulb.</title>
        <authorList>
            <person name="Maurya D.K."/>
            <person name="Sundaram C.S."/>
            <person name="Bhargava P."/>
        </authorList>
    </citation>
    <scope>IDENTIFICATION BY MASS SPECTROMETRY</scope>
</reference>
<gene>
    <name type="primary">Pnp</name>
    <name type="synonym">Np</name>
</gene>
<organism>
    <name type="scientific">Rattus norvegicus</name>
    <name type="common">Rat</name>
    <dbReference type="NCBI Taxonomy" id="10116"/>
    <lineage>
        <taxon>Eukaryota</taxon>
        <taxon>Metazoa</taxon>
        <taxon>Chordata</taxon>
        <taxon>Craniata</taxon>
        <taxon>Vertebrata</taxon>
        <taxon>Euteleostomi</taxon>
        <taxon>Mammalia</taxon>
        <taxon>Eutheria</taxon>
        <taxon>Euarchontoglires</taxon>
        <taxon>Glires</taxon>
        <taxon>Rodentia</taxon>
        <taxon>Myomorpha</taxon>
        <taxon>Muroidea</taxon>
        <taxon>Muridae</taxon>
        <taxon>Murinae</taxon>
        <taxon>Rattus</taxon>
    </lineage>
</organism>
<name>PNPH_RAT</name>
<feature type="chain" id="PRO_0000349126" description="Purine nucleoside phosphorylase">
    <location>
        <begin position="1"/>
        <end position="289"/>
    </location>
</feature>
<feature type="binding site" evidence="3">
    <location>
        <position position="33"/>
    </location>
    <ligand>
        <name>phosphate</name>
        <dbReference type="ChEBI" id="CHEBI:43474"/>
    </ligand>
</feature>
<feature type="binding site" evidence="3">
    <location>
        <position position="64"/>
    </location>
    <ligand>
        <name>phosphate</name>
        <dbReference type="ChEBI" id="CHEBI:43474"/>
    </ligand>
</feature>
<feature type="binding site" evidence="3">
    <location>
        <begin position="84"/>
        <end position="86"/>
    </location>
    <ligand>
        <name>phosphate</name>
        <dbReference type="ChEBI" id="CHEBI:43474"/>
    </ligand>
</feature>
<feature type="binding site" evidence="3">
    <location>
        <position position="88"/>
    </location>
    <ligand>
        <name>a purine D-ribonucleoside</name>
        <dbReference type="ChEBI" id="CHEBI:142355"/>
    </ligand>
</feature>
<feature type="binding site" evidence="3">
    <location>
        <position position="116"/>
    </location>
    <ligand>
        <name>phosphate</name>
        <dbReference type="ChEBI" id="CHEBI:43474"/>
    </ligand>
</feature>
<feature type="binding site" evidence="3">
    <location>
        <position position="201"/>
    </location>
    <ligand>
        <name>a purine D-ribonucleoside</name>
        <dbReference type="ChEBI" id="CHEBI:142355"/>
    </ligand>
</feature>
<feature type="binding site" evidence="3">
    <location>
        <position position="219"/>
    </location>
    <ligand>
        <name>a purine D-ribonucleoside</name>
        <dbReference type="ChEBI" id="CHEBI:142355"/>
    </ligand>
</feature>
<feature type="binding site" evidence="3">
    <location>
        <position position="220"/>
    </location>
    <ligand>
        <name>phosphate</name>
        <dbReference type="ChEBI" id="CHEBI:43474"/>
    </ligand>
</feature>
<feature type="binding site" evidence="3">
    <location>
        <position position="243"/>
    </location>
    <ligand>
        <name>a purine D-ribonucleoside</name>
        <dbReference type="ChEBI" id="CHEBI:142355"/>
    </ligand>
</feature>
<feature type="binding site" evidence="3">
    <location>
        <position position="257"/>
    </location>
    <ligand>
        <name>a purine D-ribonucleoside</name>
        <dbReference type="ChEBI" id="CHEBI:142355"/>
    </ligand>
</feature>
<feature type="site" description="Important for substrate specificity" evidence="1">
    <location>
        <position position="243"/>
    </location>
</feature>
<feature type="modified residue" description="N-acetylmethionine" evidence="1">
    <location>
        <position position="1"/>
    </location>
</feature>